<proteinExistence type="evidence at protein level"/>
<reference key="1">
    <citation type="journal article" date="1998" name="Biochem. Biophys. Res. Commun.">
        <title>Molecular cloning and expression of a cDNA encoding a human thioredoxin-like protein.</title>
        <authorList>
            <person name="Miranda-Vizuete A."/>
            <person name="Gustafsson J.-A."/>
            <person name="Spyrou G."/>
        </authorList>
    </citation>
    <scope>NUCLEOTIDE SEQUENCE [MRNA]</scope>
</reference>
<reference key="2">
    <citation type="journal article" date="1998" name="J. Biol. Chem.">
        <title>Purification, molecular cloning, and characterization of TRP32, a novel thioredoxin-related mammalian protein of 32 kDa.</title>
        <authorList>
            <person name="Lee K.-K."/>
            <person name="Murakawa M."/>
            <person name="Takahashi S."/>
            <person name="Tsubuki S."/>
            <person name="Kawashima S."/>
            <person name="Sakamaki K."/>
            <person name="Yonehara S."/>
        </authorList>
    </citation>
    <scope>NUCLEOTIDE SEQUENCE [MRNA]</scope>
</reference>
<reference key="3">
    <citation type="journal article" date="2000" name="DNA Seq.">
        <title>Genomic structure and chromosomal localization of human thioredoxin-like protein gene (txl).</title>
        <authorList>
            <person name="Miranda-Vizuete A."/>
            <person name="Spyrou G."/>
        </authorList>
    </citation>
    <scope>NUCLEOTIDE SEQUENCE [GENOMIC DNA]</scope>
</reference>
<reference key="4">
    <citation type="submission" date="1998-03" db="EMBL/GenBank/DDBJ databases">
        <title>The discovery of a new gene that has high homology to the human thioredoxin gene.</title>
        <authorList>
            <person name="Zhou Y."/>
            <person name="Pan M.H."/>
            <person name="Yuan J.G."/>
            <person name="Qiang B.Q."/>
        </authorList>
    </citation>
    <scope>NUCLEOTIDE SEQUENCE [MRNA]</scope>
    <source>
        <tissue>Brain</tissue>
    </source>
</reference>
<reference key="5">
    <citation type="journal article" date="2004" name="Genome Res.">
        <title>The status, quality, and expansion of the NIH full-length cDNA project: the Mammalian Gene Collection (MGC).</title>
        <authorList>
            <consortium name="The MGC Project Team"/>
        </authorList>
    </citation>
    <scope>NUCLEOTIDE SEQUENCE [LARGE SCALE MRNA]</scope>
    <source>
        <tissue>Lung</tissue>
    </source>
</reference>
<reference key="6">
    <citation type="journal article" date="2003" name="Nat. Biotechnol.">
        <title>Exploring proteomes and analyzing protein processing by mass spectrometric identification of sorted N-terminal peptides.</title>
        <authorList>
            <person name="Gevaert K."/>
            <person name="Goethals M."/>
            <person name="Martens L."/>
            <person name="Van Damme J."/>
            <person name="Staes A."/>
            <person name="Thomas G.R."/>
            <person name="Vandekerckhove J."/>
        </authorList>
    </citation>
    <scope>PROTEIN SEQUENCE OF 2-23</scope>
    <source>
        <tissue>Platelet</tissue>
    </source>
</reference>
<reference key="7">
    <citation type="submission" date="2007-03" db="UniProtKB">
        <authorList>
            <person name="Lubec G."/>
            <person name="Vishwanath V."/>
        </authorList>
    </citation>
    <scope>PROTEIN SEQUENCE OF 238-259</scope>
    <scope>IDENTIFICATION BY MASS SPECTROMETRY</scope>
    <source>
        <tissue>Brain</tissue>
        <tissue>Cajal-Retzius cell</tissue>
    </source>
</reference>
<reference key="8">
    <citation type="journal article" date="2009" name="J. Biol. Chem.">
        <title>Thioredoxin Txnl1/TRP32 is a redox-active cofactor of the 26 S proteasome.</title>
        <authorList>
            <person name="Andersen K.M."/>
            <person name="Madsen L."/>
            <person name="Prag S."/>
            <person name="Johnsen A.H."/>
            <person name="Semple C.A."/>
            <person name="Hendil K.B."/>
            <person name="Hartmann-Petersen R."/>
        </authorList>
    </citation>
    <scope>FUNCTION</scope>
    <scope>INTERACTION WITH PSMD14/RPN11 AND EEF1A1</scope>
    <scope>SUBCELLULAR LOCATION</scope>
</reference>
<reference key="9">
    <citation type="journal article" date="2011" name="BMC Syst. Biol.">
        <title>Initial characterization of the human central proteome.</title>
        <authorList>
            <person name="Burkard T.R."/>
            <person name="Planyavsky M."/>
            <person name="Kaupe I."/>
            <person name="Breitwieser F.P."/>
            <person name="Buerckstuemmer T."/>
            <person name="Bennett K.L."/>
            <person name="Superti-Furga G."/>
            <person name="Colinge J."/>
        </authorList>
    </citation>
    <scope>IDENTIFICATION BY MASS SPECTROMETRY [LARGE SCALE ANALYSIS]</scope>
</reference>
<reference key="10">
    <citation type="journal article" date="2012" name="Proc. Natl. Acad. Sci. U.S.A.">
        <title>N-terminal acetylome analyses and functional insights of the N-terminal acetyltransferase NatB.</title>
        <authorList>
            <person name="Van Damme P."/>
            <person name="Lasa M."/>
            <person name="Polevoda B."/>
            <person name="Gazquez C."/>
            <person name="Elosegui-Artola A."/>
            <person name="Kim D.S."/>
            <person name="De Juan-Pardo E."/>
            <person name="Demeyer K."/>
            <person name="Hole K."/>
            <person name="Larrea E."/>
            <person name="Timmerman E."/>
            <person name="Prieto J."/>
            <person name="Arnesen T."/>
            <person name="Sherman F."/>
            <person name="Gevaert K."/>
            <person name="Aldabe R."/>
        </authorList>
    </citation>
    <scope>IDENTIFICATION BY MASS SPECTROMETRY [LARGE SCALE ANALYSIS]</scope>
</reference>
<reference key="11">
    <citation type="journal article" date="2013" name="J. Proteome Res.">
        <title>Toward a comprehensive characterization of a human cancer cell phosphoproteome.</title>
        <authorList>
            <person name="Zhou H."/>
            <person name="Di Palma S."/>
            <person name="Preisinger C."/>
            <person name="Peng M."/>
            <person name="Polat A.N."/>
            <person name="Heck A.J."/>
            <person name="Mohammed S."/>
        </authorList>
    </citation>
    <scope>PHOSPHORYLATION [LARGE SCALE ANALYSIS] AT SER-113</scope>
    <scope>IDENTIFICATION BY MASS SPECTROMETRY [LARGE SCALE ANALYSIS]</scope>
    <source>
        <tissue>Cervix carcinoma</tissue>
        <tissue>Erythroleukemia</tissue>
    </source>
</reference>
<reference key="12">
    <citation type="journal article" date="2014" name="J. Proteomics">
        <title>An enzyme assisted RP-RPLC approach for in-depth analysis of human liver phosphoproteome.</title>
        <authorList>
            <person name="Bian Y."/>
            <person name="Song C."/>
            <person name="Cheng K."/>
            <person name="Dong M."/>
            <person name="Wang F."/>
            <person name="Huang J."/>
            <person name="Sun D."/>
            <person name="Wang L."/>
            <person name="Ye M."/>
            <person name="Zou H."/>
        </authorList>
    </citation>
    <scope>IDENTIFICATION BY MASS SPECTROMETRY [LARGE SCALE ANALYSIS]</scope>
    <source>
        <tissue>Liver</tissue>
    </source>
</reference>
<reference key="13">
    <citation type="journal article" date="2002" name="Eur. J. Biochem.">
        <title>Crystal structure of the catalytic domain of a human thioredoxin-like protein.</title>
        <authorList>
            <person name="Jin J."/>
            <person name="Chen X."/>
            <person name="Zhou Y."/>
            <person name="Bartlam M."/>
            <person name="Guo Q."/>
            <person name="Liu Y."/>
            <person name="Sun Y."/>
            <person name="Gao Y."/>
            <person name="Ye S."/>
            <person name="Li G."/>
            <person name="Rao Z."/>
            <person name="Qiang B."/>
            <person name="Yuan J."/>
        </authorList>
    </citation>
    <scope>X-RAY CRYSTALLOGRAPHY (2.22 ANGSTROMS) OF 1-108</scope>
    <scope>DISULFIDE BOND</scope>
</reference>
<reference key="14">
    <citation type="journal article" date="2010" name="Proteins">
        <title>Solution structure of the C-terminal DUF1000 domain of the human thioredoxin-like 1 protein.</title>
        <authorList>
            <person name="Goroncy A.K."/>
            <person name="Koshiba S."/>
            <person name="Tochio N."/>
            <person name="Tomizawa T."/>
            <person name="Inoue M."/>
            <person name="Tanaka A."/>
            <person name="Sugano S."/>
            <person name="Kigawa T."/>
            <person name="Yokoyama S."/>
        </authorList>
    </citation>
    <scope>STRUCTURE BY NMR OF 122-279</scope>
</reference>
<protein>
    <recommendedName>
        <fullName>Thioredoxin-like protein 1</fullName>
    </recommendedName>
    <alternativeName>
        <fullName>32 kDa thioredoxin-related protein</fullName>
    </alternativeName>
</protein>
<comment type="function">
    <text evidence="4">Active thioredoxin with a redox potential of about -250 mV.</text>
</comment>
<comment type="subunit">
    <text evidence="4">Component of the 19S regulatory cap of the 26S proteasome. Interacts with PSMD14/RPN11. Interacts with, and reduces EEF1A1.</text>
</comment>
<comment type="subcellular location">
    <subcellularLocation>
        <location evidence="4">Cytoplasm</location>
    </subcellularLocation>
    <subcellularLocation>
        <location evidence="4">Nucleus</location>
    </subcellularLocation>
    <text>At least 85% of the cellular TXNL1 is proteasome-associated.</text>
</comment>
<comment type="tissue specificity">
    <text>Ubiquitous.</text>
</comment>
<sequence>MVGVKPVGSDPDFQPELSGAGSRLAVVKFTMRGCGPCLRIAPAFSSMSNKYPQAVFLEVDVHQCQGTAATNNISATPTFLFFRNKVRIDQYQGADAVGLEEKIKQHLENDPGSNEDTDIPKGYMDLMPFINKAGCECLNESDEHGFDNCLRKDTTFLESDCDEQLLITVAFNQPVKLYSMKFQGPDNGQGPKYVKIFINLPRSMDFEEAERSEPTQALELTEDDIKEDGIVPLRYVKFQNVNSVTIFVQSNQGEEETTRISYFTFIGTPVQATNMNDFKRVVGKKGESH</sequence>
<name>TXNL1_HUMAN</name>
<evidence type="ECO:0000255" key="1">
    <source>
        <dbReference type="PROSITE-ProRule" id="PRU00864"/>
    </source>
</evidence>
<evidence type="ECO:0000269" key="2">
    <source>
    </source>
</evidence>
<evidence type="ECO:0000269" key="3">
    <source>
    </source>
</evidence>
<evidence type="ECO:0000269" key="4">
    <source>
    </source>
</evidence>
<evidence type="ECO:0007744" key="5">
    <source>
    </source>
</evidence>
<evidence type="ECO:0007829" key="6">
    <source>
        <dbReference type="PDB" id="1GH2"/>
    </source>
</evidence>
<evidence type="ECO:0007829" key="7">
    <source>
        <dbReference type="PDB" id="9E8J"/>
    </source>
</evidence>
<accession>O43396</accession>
<organism>
    <name type="scientific">Homo sapiens</name>
    <name type="common">Human</name>
    <dbReference type="NCBI Taxonomy" id="9606"/>
    <lineage>
        <taxon>Eukaryota</taxon>
        <taxon>Metazoa</taxon>
        <taxon>Chordata</taxon>
        <taxon>Craniata</taxon>
        <taxon>Vertebrata</taxon>
        <taxon>Euteleostomi</taxon>
        <taxon>Mammalia</taxon>
        <taxon>Eutheria</taxon>
        <taxon>Euarchontoglires</taxon>
        <taxon>Primates</taxon>
        <taxon>Haplorrhini</taxon>
        <taxon>Catarrhini</taxon>
        <taxon>Hominidae</taxon>
        <taxon>Homo</taxon>
    </lineage>
</organism>
<keyword id="KW-0002">3D-structure</keyword>
<keyword id="KW-0963">Cytoplasm</keyword>
<keyword id="KW-0903">Direct protein sequencing</keyword>
<keyword id="KW-1015">Disulfide bond</keyword>
<keyword id="KW-0249">Electron transport</keyword>
<keyword id="KW-0539">Nucleus</keyword>
<keyword id="KW-0597">Phosphoprotein</keyword>
<keyword id="KW-0647">Proteasome</keyword>
<keyword id="KW-1267">Proteomics identification</keyword>
<keyword id="KW-0676">Redox-active center</keyword>
<keyword id="KW-1185">Reference proteome</keyword>
<keyword id="KW-0813">Transport</keyword>
<gene>
    <name type="primary">TXNL1</name>
    <name type="synonym">TRP32</name>
    <name type="synonym">TXL</name>
    <name type="synonym">TXNL</name>
</gene>
<dbReference type="EMBL" id="AF003938">
    <property type="protein sequence ID" value="AAC39599.1"/>
    <property type="molecule type" value="mRNA"/>
</dbReference>
<dbReference type="EMBL" id="AF052659">
    <property type="protein sequence ID" value="AAC39898.1"/>
    <property type="molecule type" value="mRNA"/>
</dbReference>
<dbReference type="EMBL" id="AF143897">
    <property type="protein sequence ID" value="AAF66676.1"/>
    <property type="molecule type" value="Genomic_DNA"/>
</dbReference>
<dbReference type="EMBL" id="AF143890">
    <property type="protein sequence ID" value="AAF66676.1"/>
    <property type="status" value="JOINED"/>
    <property type="molecule type" value="Genomic_DNA"/>
</dbReference>
<dbReference type="EMBL" id="AF143891">
    <property type="protein sequence ID" value="AAF66676.1"/>
    <property type="status" value="JOINED"/>
    <property type="molecule type" value="Genomic_DNA"/>
</dbReference>
<dbReference type="EMBL" id="AF143892">
    <property type="protein sequence ID" value="AAF66676.1"/>
    <property type="status" value="JOINED"/>
    <property type="molecule type" value="Genomic_DNA"/>
</dbReference>
<dbReference type="EMBL" id="AF143893">
    <property type="protein sequence ID" value="AAF66676.1"/>
    <property type="status" value="JOINED"/>
    <property type="molecule type" value="Genomic_DNA"/>
</dbReference>
<dbReference type="EMBL" id="AF143894">
    <property type="protein sequence ID" value="AAF66676.1"/>
    <property type="status" value="JOINED"/>
    <property type="molecule type" value="Genomic_DNA"/>
</dbReference>
<dbReference type="EMBL" id="AF143895">
    <property type="protein sequence ID" value="AAF66676.1"/>
    <property type="status" value="JOINED"/>
    <property type="molecule type" value="Genomic_DNA"/>
</dbReference>
<dbReference type="EMBL" id="AF143896">
    <property type="protein sequence ID" value="AAF66676.1"/>
    <property type="status" value="JOINED"/>
    <property type="molecule type" value="Genomic_DNA"/>
</dbReference>
<dbReference type="EMBL" id="AF051896">
    <property type="protein sequence ID" value="AAC05830.1"/>
    <property type="molecule type" value="mRNA"/>
</dbReference>
<dbReference type="EMBL" id="BC001156">
    <property type="protein sequence ID" value="AAH01156.1"/>
    <property type="molecule type" value="mRNA"/>
</dbReference>
<dbReference type="CCDS" id="CCDS11961.1"/>
<dbReference type="PIR" id="JC5938">
    <property type="entry name" value="JC5938"/>
</dbReference>
<dbReference type="RefSeq" id="NP_004777.1">
    <property type="nucleotide sequence ID" value="NM_004786.3"/>
</dbReference>
<dbReference type="RefSeq" id="XP_016881582.1">
    <property type="nucleotide sequence ID" value="XM_017026093.1"/>
</dbReference>
<dbReference type="PDB" id="1GH2">
    <property type="method" value="X-ray"/>
    <property type="resolution" value="2.22 A"/>
    <property type="chains" value="A=2-108"/>
</dbReference>
<dbReference type="PDB" id="1WWY">
    <property type="method" value="NMR"/>
    <property type="chains" value="A=122-279"/>
</dbReference>
<dbReference type="PDB" id="9E8G">
    <property type="method" value="EM"/>
    <property type="resolution" value="3.01 A"/>
    <property type="chains" value="u=1-289"/>
</dbReference>
<dbReference type="PDB" id="9E8H">
    <property type="method" value="EM"/>
    <property type="resolution" value="2.90 A"/>
    <property type="chains" value="u=1-289"/>
</dbReference>
<dbReference type="PDB" id="9E8I">
    <property type="method" value="EM"/>
    <property type="resolution" value="2.87 A"/>
    <property type="chains" value="u=1-289"/>
</dbReference>
<dbReference type="PDB" id="9E8J">
    <property type="method" value="EM"/>
    <property type="resolution" value="3.47 A"/>
    <property type="chains" value="u=1-289"/>
</dbReference>
<dbReference type="PDB" id="9E8K">
    <property type="method" value="EM"/>
    <property type="resolution" value="4.08 A"/>
    <property type="chains" value="u=1-289"/>
</dbReference>
<dbReference type="PDB" id="9E8L">
    <property type="method" value="EM"/>
    <property type="resolution" value="3.59 A"/>
    <property type="chains" value="u=1-289"/>
</dbReference>
<dbReference type="PDB" id="9E8N">
    <property type="method" value="EM"/>
    <property type="resolution" value="3.62 A"/>
    <property type="chains" value="u=1-289"/>
</dbReference>
<dbReference type="PDB" id="9E8O">
    <property type="method" value="EM"/>
    <property type="resolution" value="3.10 A"/>
    <property type="chains" value="u=1-289"/>
</dbReference>
<dbReference type="PDBsum" id="1GH2"/>
<dbReference type="PDBsum" id="1WWY"/>
<dbReference type="PDBsum" id="9E8G"/>
<dbReference type="PDBsum" id="9E8H"/>
<dbReference type="PDBsum" id="9E8I"/>
<dbReference type="PDBsum" id="9E8J"/>
<dbReference type="PDBsum" id="9E8K"/>
<dbReference type="PDBsum" id="9E8L"/>
<dbReference type="PDBsum" id="9E8N"/>
<dbReference type="PDBsum" id="9E8O"/>
<dbReference type="BMRB" id="O43396"/>
<dbReference type="EMDB" id="EMD-47719"/>
<dbReference type="EMDB" id="EMD-47720"/>
<dbReference type="EMDB" id="EMD-47721"/>
<dbReference type="EMDB" id="EMD-47722"/>
<dbReference type="EMDB" id="EMD-47723"/>
<dbReference type="EMDB" id="EMD-47724"/>
<dbReference type="EMDB" id="EMD-47725"/>
<dbReference type="EMDB" id="EMD-47726"/>
<dbReference type="SMR" id="O43396"/>
<dbReference type="BioGRID" id="114755">
    <property type="interactions" value="233"/>
</dbReference>
<dbReference type="FunCoup" id="O43396">
    <property type="interactions" value="3025"/>
</dbReference>
<dbReference type="IntAct" id="O43396">
    <property type="interactions" value="46"/>
</dbReference>
<dbReference type="MINT" id="O43396"/>
<dbReference type="STRING" id="9606.ENSP00000217515"/>
<dbReference type="ChEMBL" id="CHEMBL4295663"/>
<dbReference type="GlyGen" id="O43396">
    <property type="glycosylation" value="1 site, 1 O-linked glycan (1 site)"/>
</dbReference>
<dbReference type="iPTMnet" id="O43396"/>
<dbReference type="MetOSite" id="O43396"/>
<dbReference type="PhosphoSitePlus" id="O43396"/>
<dbReference type="SwissPalm" id="O43396"/>
<dbReference type="BioMuta" id="TXNL1"/>
<dbReference type="OGP" id="O43396"/>
<dbReference type="REPRODUCTION-2DPAGE" id="IPI00305692"/>
<dbReference type="jPOST" id="O43396"/>
<dbReference type="MassIVE" id="O43396"/>
<dbReference type="PaxDb" id="9606-ENSP00000217515"/>
<dbReference type="PeptideAtlas" id="O43396"/>
<dbReference type="ProteomicsDB" id="48922"/>
<dbReference type="Pumba" id="O43396"/>
<dbReference type="TopDownProteomics" id="O43396"/>
<dbReference type="Antibodypedia" id="1038">
    <property type="antibodies" value="211 antibodies from 28 providers"/>
</dbReference>
<dbReference type="DNASU" id="9352"/>
<dbReference type="Ensembl" id="ENST00000217515.11">
    <property type="protein sequence ID" value="ENSP00000217515.5"/>
    <property type="gene ID" value="ENSG00000091164.13"/>
</dbReference>
<dbReference type="Ensembl" id="ENST00000590954.5">
    <property type="protein sequence ID" value="ENSP00000464918.1"/>
    <property type="gene ID" value="ENSG00000091164.13"/>
</dbReference>
<dbReference type="GeneID" id="9352"/>
<dbReference type="KEGG" id="hsa:9352"/>
<dbReference type="MANE-Select" id="ENST00000217515.11">
    <property type="protein sequence ID" value="ENSP00000217515.5"/>
    <property type="RefSeq nucleotide sequence ID" value="NM_004786.3"/>
    <property type="RefSeq protein sequence ID" value="NP_004777.1"/>
</dbReference>
<dbReference type="AGR" id="HGNC:12436"/>
<dbReference type="CTD" id="9352"/>
<dbReference type="DisGeNET" id="9352"/>
<dbReference type="GeneCards" id="TXNL1"/>
<dbReference type="HGNC" id="HGNC:12436">
    <property type="gene designation" value="TXNL1"/>
</dbReference>
<dbReference type="HPA" id="ENSG00000091164">
    <property type="expression patterns" value="Low tissue specificity"/>
</dbReference>
<dbReference type="MIM" id="603049">
    <property type="type" value="gene"/>
</dbReference>
<dbReference type="neXtProt" id="NX_O43396"/>
<dbReference type="OpenTargets" id="ENSG00000091164"/>
<dbReference type="PharmGKB" id="PA134967488"/>
<dbReference type="VEuPathDB" id="HostDB:ENSG00000091164"/>
<dbReference type="eggNOG" id="KOG0908">
    <property type="taxonomic scope" value="Eukaryota"/>
</dbReference>
<dbReference type="GeneTree" id="ENSGT00940000156170"/>
<dbReference type="HOGENOM" id="CLU_072377_0_2_1"/>
<dbReference type="InParanoid" id="O43396"/>
<dbReference type="OMA" id="PIFEMFP"/>
<dbReference type="OrthoDB" id="2121326at2759"/>
<dbReference type="PAN-GO" id="O43396">
    <property type="GO annotations" value="2 GO annotations based on evolutionary models"/>
</dbReference>
<dbReference type="PhylomeDB" id="O43396"/>
<dbReference type="TreeFam" id="TF314399"/>
<dbReference type="PathwayCommons" id="O43396"/>
<dbReference type="Reactome" id="R-HSA-9013418">
    <property type="pathway name" value="RHOBTB2 GTPase cycle"/>
</dbReference>
<dbReference type="Reactome" id="R-HSA-9013420">
    <property type="pathway name" value="RHOU GTPase cycle"/>
</dbReference>
<dbReference type="Reactome" id="R-HSA-9013422">
    <property type="pathway name" value="RHOBTB1 GTPase cycle"/>
</dbReference>
<dbReference type="Reactome" id="R-HSA-9013424">
    <property type="pathway name" value="RHOV GTPase cycle"/>
</dbReference>
<dbReference type="Reactome" id="R-HSA-9696264">
    <property type="pathway name" value="RND3 GTPase cycle"/>
</dbReference>
<dbReference type="Reactome" id="R-HSA-9696270">
    <property type="pathway name" value="RND2 GTPase cycle"/>
</dbReference>
<dbReference type="Reactome" id="R-HSA-9696273">
    <property type="pathway name" value="RND1 GTPase cycle"/>
</dbReference>
<dbReference type="SignaLink" id="O43396"/>
<dbReference type="BioGRID-ORCS" id="9352">
    <property type="hits" value="26 hits in 1157 CRISPR screens"/>
</dbReference>
<dbReference type="CD-CODE" id="FB4E32DD">
    <property type="entry name" value="Presynaptic clusters and postsynaptic densities"/>
</dbReference>
<dbReference type="ChiTaRS" id="TXNL1">
    <property type="organism name" value="human"/>
</dbReference>
<dbReference type="EvolutionaryTrace" id="O43396"/>
<dbReference type="GeneWiki" id="TXNL1"/>
<dbReference type="GenomeRNAi" id="9352"/>
<dbReference type="Pharos" id="O43396">
    <property type="development level" value="Tbio"/>
</dbReference>
<dbReference type="PRO" id="PR:O43396"/>
<dbReference type="Proteomes" id="UP000005640">
    <property type="component" value="Chromosome 18"/>
</dbReference>
<dbReference type="RNAct" id="O43396">
    <property type="molecule type" value="protein"/>
</dbReference>
<dbReference type="Bgee" id="ENSG00000091164">
    <property type="expression patterns" value="Expressed in parotid gland and 211 other cell types or tissues"/>
</dbReference>
<dbReference type="ExpressionAtlas" id="O43396">
    <property type="expression patterns" value="baseline and differential"/>
</dbReference>
<dbReference type="GO" id="GO:0005737">
    <property type="term" value="C:cytoplasm"/>
    <property type="evidence" value="ECO:0000314"/>
    <property type="project" value="UniProtKB"/>
</dbReference>
<dbReference type="GO" id="GO:0005829">
    <property type="term" value="C:cytosol"/>
    <property type="evidence" value="ECO:0000314"/>
    <property type="project" value="HPA"/>
</dbReference>
<dbReference type="GO" id="GO:0005634">
    <property type="term" value="C:nucleus"/>
    <property type="evidence" value="ECO:0007669"/>
    <property type="project" value="UniProtKB-SubCell"/>
</dbReference>
<dbReference type="GO" id="GO:0000502">
    <property type="term" value="C:proteasome complex"/>
    <property type="evidence" value="ECO:0007669"/>
    <property type="project" value="UniProtKB-KW"/>
</dbReference>
<dbReference type="GO" id="GO:0015036">
    <property type="term" value="F:disulfide oxidoreductase activity"/>
    <property type="evidence" value="ECO:0000314"/>
    <property type="project" value="UniProtKB"/>
</dbReference>
<dbReference type="GO" id="GO:0015035">
    <property type="term" value="F:protein-disulfide reductase activity"/>
    <property type="evidence" value="ECO:0000318"/>
    <property type="project" value="GO_Central"/>
</dbReference>
<dbReference type="CDD" id="cd02947">
    <property type="entry name" value="TRX_family"/>
    <property type="match status" value="1"/>
</dbReference>
<dbReference type="FunFam" id="2.60.120.470:FF:000001">
    <property type="entry name" value="Thioredoxin-like 1, isoform CRA_c"/>
    <property type="match status" value="1"/>
</dbReference>
<dbReference type="FunFam" id="3.40.30.10:FF:000082">
    <property type="entry name" value="Thioredoxin-like protein 1"/>
    <property type="match status" value="1"/>
</dbReference>
<dbReference type="Gene3D" id="3.40.30.10">
    <property type="entry name" value="Glutaredoxin"/>
    <property type="match status" value="1"/>
</dbReference>
<dbReference type="Gene3D" id="2.60.120.470">
    <property type="entry name" value="PITH domain"/>
    <property type="match status" value="1"/>
</dbReference>
<dbReference type="InterPro" id="IPR008979">
    <property type="entry name" value="Galactose-bd-like_sf"/>
</dbReference>
<dbReference type="InterPro" id="IPR010400">
    <property type="entry name" value="PITH_dom"/>
</dbReference>
<dbReference type="InterPro" id="IPR037047">
    <property type="entry name" value="PITH_dom_sf"/>
</dbReference>
<dbReference type="InterPro" id="IPR036249">
    <property type="entry name" value="Thioredoxin-like_sf"/>
</dbReference>
<dbReference type="InterPro" id="IPR017937">
    <property type="entry name" value="Thioredoxin_CS"/>
</dbReference>
<dbReference type="InterPro" id="IPR013766">
    <property type="entry name" value="Thioredoxin_domain"/>
</dbReference>
<dbReference type="PANTHER" id="PTHR46115">
    <property type="entry name" value="THIOREDOXIN-LIKE PROTEIN 1"/>
    <property type="match status" value="1"/>
</dbReference>
<dbReference type="Pfam" id="PF06201">
    <property type="entry name" value="PITH"/>
    <property type="match status" value="1"/>
</dbReference>
<dbReference type="Pfam" id="PF00085">
    <property type="entry name" value="Thioredoxin"/>
    <property type="match status" value="1"/>
</dbReference>
<dbReference type="SUPFAM" id="SSF49785">
    <property type="entry name" value="Galactose-binding domain-like"/>
    <property type="match status" value="1"/>
</dbReference>
<dbReference type="SUPFAM" id="SSF52833">
    <property type="entry name" value="Thioredoxin-like"/>
    <property type="match status" value="1"/>
</dbReference>
<dbReference type="PROSITE" id="PS51532">
    <property type="entry name" value="PITH"/>
    <property type="match status" value="1"/>
</dbReference>
<dbReference type="PROSITE" id="PS00194">
    <property type="entry name" value="THIOREDOXIN_1"/>
    <property type="match status" value="1"/>
</dbReference>
<feature type="initiator methionine" description="Removed" evidence="3">
    <location>
        <position position="1"/>
    </location>
</feature>
<feature type="chain" id="PRO_0000120016" description="Thioredoxin-like protein 1">
    <location>
        <begin position="2"/>
        <end position="289"/>
    </location>
</feature>
<feature type="domain" description="Thioredoxin">
    <location>
        <begin position="2"/>
        <end position="109"/>
    </location>
</feature>
<feature type="domain" description="PITH" evidence="1">
    <location>
        <begin position="115"/>
        <end position="285"/>
    </location>
</feature>
<feature type="modified residue" description="Phosphoserine" evidence="5">
    <location>
        <position position="113"/>
    </location>
</feature>
<feature type="disulfide bond" description="Redox-active" evidence="2">
    <location>
        <begin position="34"/>
        <end position="37"/>
    </location>
</feature>
<feature type="strand" evidence="6">
    <location>
        <begin position="4"/>
        <end position="7"/>
    </location>
</feature>
<feature type="helix" evidence="6">
    <location>
        <begin position="10"/>
        <end position="12"/>
    </location>
</feature>
<feature type="helix" evidence="6">
    <location>
        <begin position="13"/>
        <end position="19"/>
    </location>
</feature>
<feature type="turn" evidence="6">
    <location>
        <begin position="20"/>
        <end position="22"/>
    </location>
</feature>
<feature type="strand" evidence="6">
    <location>
        <begin position="25"/>
        <end position="30"/>
    </location>
</feature>
<feature type="helix" evidence="6">
    <location>
        <begin position="35"/>
        <end position="50"/>
    </location>
</feature>
<feature type="strand" evidence="6">
    <location>
        <begin position="54"/>
        <end position="60"/>
    </location>
</feature>
<feature type="turn" evidence="6">
    <location>
        <begin position="61"/>
        <end position="63"/>
    </location>
</feature>
<feature type="helix" evidence="6">
    <location>
        <begin position="65"/>
        <end position="70"/>
    </location>
</feature>
<feature type="strand" evidence="6">
    <location>
        <begin position="75"/>
        <end position="83"/>
    </location>
</feature>
<feature type="strand" evidence="6">
    <location>
        <begin position="86"/>
        <end position="94"/>
    </location>
</feature>
<feature type="helix" evidence="6">
    <location>
        <begin position="96"/>
        <end position="107"/>
    </location>
</feature>
<feature type="strand" evidence="7">
    <location>
        <begin position="124"/>
        <end position="126"/>
    </location>
</feature>
<feature type="helix" evidence="7">
    <location>
        <begin position="127"/>
        <end position="129"/>
    </location>
</feature>
<feature type="turn" evidence="7">
    <location>
        <begin position="132"/>
        <end position="134"/>
    </location>
</feature>
<feature type="strand" evidence="7">
    <location>
        <begin position="136"/>
        <end position="140"/>
    </location>
</feature>
<feature type="strand" evidence="7">
    <location>
        <begin position="142"/>
        <end position="144"/>
    </location>
</feature>
<feature type="helix" evidence="7">
    <location>
        <begin position="146"/>
        <end position="149"/>
    </location>
</feature>
<feature type="strand" evidence="7">
    <location>
        <begin position="151"/>
        <end position="154"/>
    </location>
</feature>
<feature type="strand" evidence="7">
    <location>
        <begin position="157"/>
        <end position="161"/>
    </location>
</feature>
<feature type="strand" evidence="7">
    <location>
        <begin position="165"/>
        <end position="175"/>
    </location>
</feature>
<feature type="strand" evidence="7">
    <location>
        <begin position="178"/>
        <end position="180"/>
    </location>
</feature>
<feature type="turn" evidence="7">
    <location>
        <begin position="186"/>
        <end position="189"/>
    </location>
</feature>
<feature type="strand" evidence="7">
    <location>
        <begin position="193"/>
        <end position="199"/>
    </location>
</feature>
<feature type="helix" evidence="7">
    <location>
        <begin position="206"/>
        <end position="211"/>
    </location>
</feature>
<feature type="strand" evidence="7">
    <location>
        <begin position="215"/>
        <end position="219"/>
    </location>
</feature>
<feature type="helix" evidence="7">
    <location>
        <begin position="222"/>
        <end position="225"/>
    </location>
</feature>
<feature type="turn" evidence="7">
    <location>
        <begin position="235"/>
        <end position="237"/>
    </location>
</feature>
<feature type="strand" evidence="7">
    <location>
        <begin position="239"/>
        <end position="248"/>
    </location>
</feature>
<feature type="strand" evidence="7">
    <location>
        <begin position="259"/>
        <end position="262"/>
    </location>
</feature>
<feature type="strand" evidence="7">
    <location>
        <begin position="265"/>
        <end position="267"/>
    </location>
</feature>
<feature type="turn" evidence="7">
    <location>
        <begin position="275"/>
        <end position="277"/>
    </location>
</feature>